<accession>Q8K2Q7</accession>
<accession>Q8BWM8</accession>
<accession>Q9DCT7</accession>
<reference key="1">
    <citation type="journal article" date="2005" name="Science">
        <title>The transcriptional landscape of the mammalian genome.</title>
        <authorList>
            <person name="Carninci P."/>
            <person name="Kasukawa T."/>
            <person name="Katayama S."/>
            <person name="Gough J."/>
            <person name="Frith M.C."/>
            <person name="Maeda N."/>
            <person name="Oyama R."/>
            <person name="Ravasi T."/>
            <person name="Lenhard B."/>
            <person name="Wells C."/>
            <person name="Kodzius R."/>
            <person name="Shimokawa K."/>
            <person name="Bajic V.B."/>
            <person name="Brenner S.E."/>
            <person name="Batalov S."/>
            <person name="Forrest A.R."/>
            <person name="Zavolan M."/>
            <person name="Davis M.J."/>
            <person name="Wilming L.G."/>
            <person name="Aidinis V."/>
            <person name="Allen J.E."/>
            <person name="Ambesi-Impiombato A."/>
            <person name="Apweiler R."/>
            <person name="Aturaliya R.N."/>
            <person name="Bailey T.L."/>
            <person name="Bansal M."/>
            <person name="Baxter L."/>
            <person name="Beisel K.W."/>
            <person name="Bersano T."/>
            <person name="Bono H."/>
            <person name="Chalk A.M."/>
            <person name="Chiu K.P."/>
            <person name="Choudhary V."/>
            <person name="Christoffels A."/>
            <person name="Clutterbuck D.R."/>
            <person name="Crowe M.L."/>
            <person name="Dalla E."/>
            <person name="Dalrymple B.P."/>
            <person name="de Bono B."/>
            <person name="Della Gatta G."/>
            <person name="di Bernardo D."/>
            <person name="Down T."/>
            <person name="Engstrom P."/>
            <person name="Fagiolini M."/>
            <person name="Faulkner G."/>
            <person name="Fletcher C.F."/>
            <person name="Fukushima T."/>
            <person name="Furuno M."/>
            <person name="Futaki S."/>
            <person name="Gariboldi M."/>
            <person name="Georgii-Hemming P."/>
            <person name="Gingeras T.R."/>
            <person name="Gojobori T."/>
            <person name="Green R.E."/>
            <person name="Gustincich S."/>
            <person name="Harbers M."/>
            <person name="Hayashi Y."/>
            <person name="Hensch T.K."/>
            <person name="Hirokawa N."/>
            <person name="Hill D."/>
            <person name="Huminiecki L."/>
            <person name="Iacono M."/>
            <person name="Ikeo K."/>
            <person name="Iwama A."/>
            <person name="Ishikawa T."/>
            <person name="Jakt M."/>
            <person name="Kanapin A."/>
            <person name="Katoh M."/>
            <person name="Kawasawa Y."/>
            <person name="Kelso J."/>
            <person name="Kitamura H."/>
            <person name="Kitano H."/>
            <person name="Kollias G."/>
            <person name="Krishnan S.P."/>
            <person name="Kruger A."/>
            <person name="Kummerfeld S.K."/>
            <person name="Kurochkin I.V."/>
            <person name="Lareau L.F."/>
            <person name="Lazarevic D."/>
            <person name="Lipovich L."/>
            <person name="Liu J."/>
            <person name="Liuni S."/>
            <person name="McWilliam S."/>
            <person name="Madan Babu M."/>
            <person name="Madera M."/>
            <person name="Marchionni L."/>
            <person name="Matsuda H."/>
            <person name="Matsuzawa S."/>
            <person name="Miki H."/>
            <person name="Mignone F."/>
            <person name="Miyake S."/>
            <person name="Morris K."/>
            <person name="Mottagui-Tabar S."/>
            <person name="Mulder N."/>
            <person name="Nakano N."/>
            <person name="Nakauchi H."/>
            <person name="Ng P."/>
            <person name="Nilsson R."/>
            <person name="Nishiguchi S."/>
            <person name="Nishikawa S."/>
            <person name="Nori F."/>
            <person name="Ohara O."/>
            <person name="Okazaki Y."/>
            <person name="Orlando V."/>
            <person name="Pang K.C."/>
            <person name="Pavan W.J."/>
            <person name="Pavesi G."/>
            <person name="Pesole G."/>
            <person name="Petrovsky N."/>
            <person name="Piazza S."/>
            <person name="Reed J."/>
            <person name="Reid J.F."/>
            <person name="Ring B.Z."/>
            <person name="Ringwald M."/>
            <person name="Rost B."/>
            <person name="Ruan Y."/>
            <person name="Salzberg S.L."/>
            <person name="Sandelin A."/>
            <person name="Schneider C."/>
            <person name="Schoenbach C."/>
            <person name="Sekiguchi K."/>
            <person name="Semple C.A."/>
            <person name="Seno S."/>
            <person name="Sessa L."/>
            <person name="Sheng Y."/>
            <person name="Shibata Y."/>
            <person name="Shimada H."/>
            <person name="Shimada K."/>
            <person name="Silva D."/>
            <person name="Sinclair B."/>
            <person name="Sperling S."/>
            <person name="Stupka E."/>
            <person name="Sugiura K."/>
            <person name="Sultana R."/>
            <person name="Takenaka Y."/>
            <person name="Taki K."/>
            <person name="Tammoja K."/>
            <person name="Tan S.L."/>
            <person name="Tang S."/>
            <person name="Taylor M.S."/>
            <person name="Tegner J."/>
            <person name="Teichmann S.A."/>
            <person name="Ueda H.R."/>
            <person name="van Nimwegen E."/>
            <person name="Verardo R."/>
            <person name="Wei C.L."/>
            <person name="Yagi K."/>
            <person name="Yamanishi H."/>
            <person name="Zabarovsky E."/>
            <person name="Zhu S."/>
            <person name="Zimmer A."/>
            <person name="Hide W."/>
            <person name="Bult C."/>
            <person name="Grimmond S.M."/>
            <person name="Teasdale R.D."/>
            <person name="Liu E.T."/>
            <person name="Brusic V."/>
            <person name="Quackenbush J."/>
            <person name="Wahlestedt C."/>
            <person name="Mattick J.S."/>
            <person name="Hume D.A."/>
            <person name="Kai C."/>
            <person name="Sasaki D."/>
            <person name="Tomaru Y."/>
            <person name="Fukuda S."/>
            <person name="Kanamori-Katayama M."/>
            <person name="Suzuki M."/>
            <person name="Aoki J."/>
            <person name="Arakawa T."/>
            <person name="Iida J."/>
            <person name="Imamura K."/>
            <person name="Itoh M."/>
            <person name="Kato T."/>
            <person name="Kawaji H."/>
            <person name="Kawagashira N."/>
            <person name="Kawashima T."/>
            <person name="Kojima M."/>
            <person name="Kondo S."/>
            <person name="Konno H."/>
            <person name="Nakano K."/>
            <person name="Ninomiya N."/>
            <person name="Nishio T."/>
            <person name="Okada M."/>
            <person name="Plessy C."/>
            <person name="Shibata K."/>
            <person name="Shiraki T."/>
            <person name="Suzuki S."/>
            <person name="Tagami M."/>
            <person name="Waki K."/>
            <person name="Watahiki A."/>
            <person name="Okamura-Oho Y."/>
            <person name="Suzuki H."/>
            <person name="Kawai J."/>
            <person name="Hayashizaki Y."/>
        </authorList>
    </citation>
    <scope>NUCLEOTIDE SEQUENCE [LARGE SCALE MRNA] (ISOFORMS 1 AND 2)</scope>
    <source>
        <strain>C57BL/6J</strain>
        <tissue>Egg</tissue>
        <tissue>Kidney</tissue>
        <tissue>Pancreas</tissue>
    </source>
</reference>
<reference key="2">
    <citation type="journal article" date="2004" name="Genome Res.">
        <title>The status, quality, and expansion of the NIH full-length cDNA project: the Mammalian Gene Collection (MGC).</title>
        <authorList>
            <consortium name="The MGC Project Team"/>
        </authorList>
    </citation>
    <scope>NUCLEOTIDE SEQUENCE [LARGE SCALE MRNA] (ISOFORM 1)</scope>
    <source>
        <strain>FVB/N</strain>
        <tissue>Mammary tumor</tissue>
    </source>
</reference>
<reference key="3">
    <citation type="journal article" date="2010" name="Cell">
        <title>A tissue-specific atlas of mouse protein phosphorylation and expression.</title>
        <authorList>
            <person name="Huttlin E.L."/>
            <person name="Jedrychowski M.P."/>
            <person name="Elias J.E."/>
            <person name="Goswami T."/>
            <person name="Rad R."/>
            <person name="Beausoleil S.A."/>
            <person name="Villen J."/>
            <person name="Haas W."/>
            <person name="Sowa M.E."/>
            <person name="Gygi S.P."/>
        </authorList>
    </citation>
    <scope>IDENTIFICATION BY MASS SPECTROMETRY [LARGE SCALE ANALYSIS]</scope>
    <source>
        <tissue>Brain</tissue>
        <tissue>Heart</tissue>
        <tissue>Kidney</tissue>
        <tissue>Liver</tissue>
        <tissue>Lung</tissue>
        <tissue>Pancreas</tissue>
        <tissue>Spleen</tissue>
        <tissue>Testis</tissue>
    </source>
</reference>
<comment type="function">
    <text evidence="2">Nuclear envelope-associated factor that is involved in the nuclear envelope ruptures during interphase (NERDI) repair, where it is locally recruited by CHMP5 and reduces cytoskeletal stress through its action on SYN2 to help reseal the ruptured membrane.</text>
</comment>
<comment type="subunit">
    <text evidence="2">Monomer. Interacts with CHMP4B. Interacts with CHMP5: this interaction allows the recruitment of BROX to cellular membranes. Interacts with SYN2; this interaction promotes SYN2 ubiquitination and facilitates the relaxation of mechanical stress imposed by compressive actin fibers at the rupture site.</text>
</comment>
<comment type="subcellular location">
    <subcellularLocation>
        <location evidence="2">Nucleus membrane</location>
        <topology evidence="2">Lipid-anchor</topology>
    </subcellularLocation>
    <text evidence="2">During nuclear envelope repair, localizes at rupture sites where it is recruited by the CHMP7/ESCRT-III axis.</text>
</comment>
<comment type="alternative products">
    <event type="alternative splicing"/>
    <isoform>
        <id>Q8K2Q7-1</id>
        <name>1</name>
        <sequence type="displayed"/>
    </isoform>
    <isoform>
        <id>Q8K2Q7-2</id>
        <name>2</name>
        <sequence type="described" ref="VSP_028041 VSP_028042"/>
    </isoform>
</comment>
<comment type="PTM">
    <text evidence="2">Farnesylation is required for nuclear envelope localization.</text>
</comment>
<comment type="similarity">
    <text evidence="6">Belongs to the BROX family.</text>
</comment>
<dbReference type="EMBL" id="AK002489">
    <property type="protein sequence ID" value="BAB22138.1"/>
    <property type="molecule type" value="mRNA"/>
</dbReference>
<dbReference type="EMBL" id="AK050525">
    <property type="protein sequence ID" value="BAC34307.1"/>
    <property type="molecule type" value="mRNA"/>
</dbReference>
<dbReference type="EMBL" id="AK162247">
    <property type="protein sequence ID" value="BAE36814.1"/>
    <property type="molecule type" value="mRNA"/>
</dbReference>
<dbReference type="EMBL" id="BC030340">
    <property type="protein sequence ID" value="AAH30340.1"/>
    <property type="molecule type" value="mRNA"/>
</dbReference>
<dbReference type="EMBL" id="BC120692">
    <property type="protein sequence ID" value="AAI20693.1"/>
    <property type="molecule type" value="mRNA"/>
</dbReference>
<dbReference type="EMBL" id="BC125527">
    <property type="protein sequence ID" value="AAI25528.1"/>
    <property type="molecule type" value="mRNA"/>
</dbReference>
<dbReference type="CCDS" id="CCDS56662.1">
    <molecule id="Q8K2Q7-1"/>
</dbReference>
<dbReference type="RefSeq" id="NP_001344171.1">
    <molecule id="Q8K2Q7-1"/>
    <property type="nucleotide sequence ID" value="NM_001357242.2"/>
</dbReference>
<dbReference type="RefSeq" id="NP_082137.1">
    <molecule id="Q8K2Q7-1"/>
    <property type="nucleotide sequence ID" value="NM_027861.4"/>
</dbReference>
<dbReference type="RefSeq" id="XP_006535660.1">
    <property type="nucleotide sequence ID" value="XM_006535597.3"/>
</dbReference>
<dbReference type="RefSeq" id="XP_006535661.1">
    <molecule id="Q8K2Q7-1"/>
    <property type="nucleotide sequence ID" value="XM_006535598.4"/>
</dbReference>
<dbReference type="SMR" id="Q8K2Q7"/>
<dbReference type="BioGRID" id="214849">
    <property type="interactions" value="3"/>
</dbReference>
<dbReference type="FunCoup" id="Q8K2Q7">
    <property type="interactions" value="3063"/>
</dbReference>
<dbReference type="STRING" id="10090.ENSMUSP00000061345"/>
<dbReference type="GlyGen" id="Q8K2Q7">
    <property type="glycosylation" value="1 site"/>
</dbReference>
<dbReference type="iPTMnet" id="Q8K2Q7"/>
<dbReference type="PhosphoSitePlus" id="Q8K2Q7"/>
<dbReference type="SwissPalm" id="Q8K2Q7"/>
<dbReference type="jPOST" id="Q8K2Q7"/>
<dbReference type="PaxDb" id="10090-ENSMUSP00000061345"/>
<dbReference type="PeptideAtlas" id="Q8K2Q7"/>
<dbReference type="ProteomicsDB" id="273767">
    <molecule id="Q8K2Q7-1"/>
</dbReference>
<dbReference type="ProteomicsDB" id="273768">
    <molecule id="Q8K2Q7-2"/>
</dbReference>
<dbReference type="Pumba" id="Q8K2Q7"/>
<dbReference type="Antibodypedia" id="34631">
    <property type="antibodies" value="26 antibodies from 13 providers"/>
</dbReference>
<dbReference type="DNASU" id="71678"/>
<dbReference type="Ensembl" id="ENSMUST00000057062.12">
    <molecule id="Q8K2Q7-1"/>
    <property type="protein sequence ID" value="ENSMUSP00000061345.6"/>
    <property type="gene ID" value="ENSMUSG00000046836.14"/>
</dbReference>
<dbReference type="Ensembl" id="ENSMUST00000163528.8">
    <molecule id="Q8K2Q7-1"/>
    <property type="protein sequence ID" value="ENSMUSP00000132333.4"/>
    <property type="gene ID" value="ENSMUSG00000046836.14"/>
</dbReference>
<dbReference type="GeneID" id="71678"/>
<dbReference type="KEGG" id="mmu:71678"/>
<dbReference type="UCSC" id="uc008icq.1">
    <molecule id="Q8K2Q7-1"/>
    <property type="organism name" value="mouse"/>
</dbReference>
<dbReference type="AGR" id="MGI:1918928"/>
<dbReference type="CTD" id="148362"/>
<dbReference type="MGI" id="MGI:1918928">
    <property type="gene designation" value="Brox"/>
</dbReference>
<dbReference type="VEuPathDB" id="HostDB:ENSMUSG00000046836"/>
<dbReference type="eggNOG" id="ENOG502QQBR">
    <property type="taxonomic scope" value="Eukaryota"/>
</dbReference>
<dbReference type="GeneTree" id="ENSGT00390000006681"/>
<dbReference type="HOGENOM" id="CLU_056561_0_0_1"/>
<dbReference type="InParanoid" id="Q8K2Q7"/>
<dbReference type="OMA" id="YNYCGEN"/>
<dbReference type="OrthoDB" id="10266451at2759"/>
<dbReference type="PhylomeDB" id="Q8K2Q7"/>
<dbReference type="TreeFam" id="TF314743"/>
<dbReference type="BioGRID-ORCS" id="71678">
    <property type="hits" value="1 hit in 77 CRISPR screens"/>
</dbReference>
<dbReference type="ChiTaRS" id="Brox">
    <property type="organism name" value="mouse"/>
</dbReference>
<dbReference type="PRO" id="PR:Q8K2Q7"/>
<dbReference type="Proteomes" id="UP000000589">
    <property type="component" value="Chromosome 1"/>
</dbReference>
<dbReference type="RNAct" id="Q8K2Q7">
    <property type="molecule type" value="protein"/>
</dbReference>
<dbReference type="Bgee" id="ENSMUSG00000046836">
    <property type="expression patterns" value="Expressed in cortical plate and 78 other cell types or tissues"/>
</dbReference>
<dbReference type="ExpressionAtlas" id="Q8K2Q7">
    <property type="expression patterns" value="baseline and differential"/>
</dbReference>
<dbReference type="GO" id="GO:0005635">
    <property type="term" value="C:nuclear envelope"/>
    <property type="evidence" value="ECO:0000250"/>
    <property type="project" value="UniProtKB"/>
</dbReference>
<dbReference type="GO" id="GO:0031965">
    <property type="term" value="C:nuclear membrane"/>
    <property type="evidence" value="ECO:0007669"/>
    <property type="project" value="UniProtKB-SubCell"/>
</dbReference>
<dbReference type="GO" id="GO:0007084">
    <property type="term" value="P:mitotic nuclear membrane reassembly"/>
    <property type="evidence" value="ECO:0000250"/>
    <property type="project" value="UniProtKB"/>
</dbReference>
<dbReference type="CDD" id="cd09243">
    <property type="entry name" value="BRO1_Brox_like"/>
    <property type="match status" value="1"/>
</dbReference>
<dbReference type="FunFam" id="1.25.40.280:FF:000004">
    <property type="entry name" value="BRO1 domain-containing protein BROX"/>
    <property type="match status" value="1"/>
</dbReference>
<dbReference type="Gene3D" id="1.25.40.280">
    <property type="entry name" value="alix/aip1 like domains"/>
    <property type="match status" value="1"/>
</dbReference>
<dbReference type="InterPro" id="IPR004328">
    <property type="entry name" value="BRO1_dom"/>
</dbReference>
<dbReference type="InterPro" id="IPR038499">
    <property type="entry name" value="BRO1_sf"/>
</dbReference>
<dbReference type="InterPro" id="IPR038898">
    <property type="entry name" value="BROX"/>
</dbReference>
<dbReference type="PANTHER" id="PTHR23032">
    <property type="entry name" value="BRO1 DOMAIN-CONTAINING PROTEIN BROX"/>
    <property type="match status" value="1"/>
</dbReference>
<dbReference type="PANTHER" id="PTHR23032:SF13">
    <property type="entry name" value="BRO1 DOMAIN-CONTAINING PROTEIN BROX"/>
    <property type="match status" value="1"/>
</dbReference>
<dbReference type="Pfam" id="PF03097">
    <property type="entry name" value="BRO1"/>
    <property type="match status" value="1"/>
</dbReference>
<dbReference type="SMART" id="SM01041">
    <property type="entry name" value="BRO1"/>
    <property type="match status" value="1"/>
</dbReference>
<dbReference type="PROSITE" id="PS51180">
    <property type="entry name" value="BRO1"/>
    <property type="match status" value="1"/>
</dbReference>
<keyword id="KW-0025">Alternative splicing</keyword>
<keyword id="KW-0449">Lipoprotein</keyword>
<keyword id="KW-0472">Membrane</keyword>
<keyword id="KW-0488">Methylation</keyword>
<keyword id="KW-0539">Nucleus</keyword>
<keyword id="KW-0636">Prenylation</keyword>
<keyword id="KW-1185">Reference proteome</keyword>
<feature type="chain" id="PRO_0000304613" description="BRO1 domain-containing protein BROX">
    <location>
        <begin position="1"/>
        <end position="408"/>
    </location>
</feature>
<feature type="propeptide" id="PRO_0000396737" description="Removed in mature form" evidence="1">
    <location>
        <begin position="409"/>
        <end position="411"/>
    </location>
</feature>
<feature type="domain" description="BRO1" evidence="3">
    <location>
        <begin position="90"/>
        <end position="408"/>
    </location>
</feature>
<feature type="region of interest" description="Disordered" evidence="4">
    <location>
        <begin position="375"/>
        <end position="411"/>
    </location>
</feature>
<feature type="compositionally biased region" description="Basic and acidic residues" evidence="4">
    <location>
        <begin position="375"/>
        <end position="404"/>
    </location>
</feature>
<feature type="modified residue" description="Cysteine methyl ester" evidence="1">
    <location>
        <position position="408"/>
    </location>
</feature>
<feature type="lipid moiety-binding region" description="S-farnesyl cysteine" evidence="1">
    <location>
        <position position="408"/>
    </location>
</feature>
<feature type="splice variant" id="VSP_028041" description="In isoform 2." evidence="5">
    <original>SA</original>
    <variation>RF</variation>
    <location>
        <begin position="102"/>
        <end position="103"/>
    </location>
</feature>
<feature type="splice variant" id="VSP_028042" description="In isoform 2." evidence="5">
    <location>
        <begin position="104"/>
        <end position="411"/>
    </location>
</feature>
<feature type="sequence conflict" description="In Ref. 1; BAC34307." evidence="6" ref="1">
    <original>P</original>
    <variation>S</variation>
    <location>
        <position position="163"/>
    </location>
</feature>
<name>BROX_MOUSE</name>
<protein>
    <recommendedName>
        <fullName evidence="6">BRO1 domain-containing protein BROX</fullName>
    </recommendedName>
    <alternativeName>
        <fullName>BRO1 domain- and CAAX motif-containing protein</fullName>
    </alternativeName>
</protein>
<gene>
    <name evidence="7" type="primary">Brox</name>
</gene>
<organism>
    <name type="scientific">Mus musculus</name>
    <name type="common">Mouse</name>
    <dbReference type="NCBI Taxonomy" id="10090"/>
    <lineage>
        <taxon>Eukaryota</taxon>
        <taxon>Metazoa</taxon>
        <taxon>Chordata</taxon>
        <taxon>Craniata</taxon>
        <taxon>Vertebrata</taxon>
        <taxon>Euteleostomi</taxon>
        <taxon>Mammalia</taxon>
        <taxon>Eutheria</taxon>
        <taxon>Euarchontoglires</taxon>
        <taxon>Glires</taxon>
        <taxon>Rodentia</taxon>
        <taxon>Myomorpha</taxon>
        <taxon>Muroidea</taxon>
        <taxon>Muridae</taxon>
        <taxon>Murinae</taxon>
        <taxon>Mus</taxon>
        <taxon>Mus</taxon>
    </lineage>
</organism>
<proteinExistence type="evidence at protein level"/>
<sequence length="411" mass="46202">MTHWFHRNPLKATAPVSFNYYGMITGPPASKICNDLRSARTRLLELFTDLSCNPETMKNAADLYFSLLQGFINSVGDSTQESKLRYIQNFKWTDTLQGHVPSAQQDAVFELISMGFNVALWYTKYASRLAGKENITEDEAKEVHRSLKIAAGIFKHLKESHIPKLLTPAEKGRDLEARLIDAYIIQCQAEAQEVTIARAIELKHAPGLIAALAYDTASFYQKADHTLSSLEPAHSAKWRKYLHLKMCFYTAYAYCYHGQTLLASDKCGEAIRSLQEAEKLYAEAEALCKEYGETKGPGPTAKPSGHLFFRKLGSLVKNTLDKCQRENGFIYFQKIPTEAPQLELKANYGLVEPVPFEFPPMSAHWTPEALAAFDLTKRPKDDSVKPKPEEDVKPVKEPDIRPQKDTGCSVS</sequence>
<evidence type="ECO:0000250" key="1"/>
<evidence type="ECO:0000250" key="2">
    <source>
        <dbReference type="UniProtKB" id="Q5VW32"/>
    </source>
</evidence>
<evidence type="ECO:0000255" key="3">
    <source>
        <dbReference type="PROSITE-ProRule" id="PRU00526"/>
    </source>
</evidence>
<evidence type="ECO:0000256" key="4">
    <source>
        <dbReference type="SAM" id="MobiDB-lite"/>
    </source>
</evidence>
<evidence type="ECO:0000303" key="5">
    <source>
    </source>
</evidence>
<evidence type="ECO:0000305" key="6"/>
<evidence type="ECO:0000312" key="7">
    <source>
        <dbReference type="MGI" id="MGI:1918928"/>
    </source>
</evidence>